<evidence type="ECO:0000255" key="1">
    <source>
        <dbReference type="HAMAP-Rule" id="MF_00627"/>
    </source>
</evidence>
<evidence type="ECO:0000269" key="2">
    <source>
    </source>
</evidence>
<evidence type="ECO:0000269" key="3">
    <source>
    </source>
</evidence>
<evidence type="ECO:0000269" key="4">
    <source>
    </source>
</evidence>
<evidence type="ECO:0000269" key="5">
    <source>
    </source>
</evidence>
<evidence type="ECO:0000269" key="6">
    <source ref="5"/>
</evidence>
<evidence type="ECO:0000303" key="7">
    <source>
    </source>
</evidence>
<evidence type="ECO:0000303" key="8">
    <source>
    </source>
</evidence>
<evidence type="ECO:0000305" key="9">
    <source>
    </source>
</evidence>
<evidence type="ECO:0000305" key="10">
    <source>
    </source>
</evidence>
<evidence type="ECO:0000305" key="11">
    <source>
    </source>
</evidence>
<evidence type="ECO:0007744" key="12">
    <source>
        <dbReference type="PDB" id="2D8A"/>
    </source>
</evidence>
<evidence type="ECO:0007744" key="13">
    <source>
        <dbReference type="PDB" id="2DFV"/>
    </source>
</evidence>
<evidence type="ECO:0007829" key="14">
    <source>
        <dbReference type="PDB" id="2D8A"/>
    </source>
</evidence>
<evidence type="ECO:0007829" key="15">
    <source>
        <dbReference type="PDB" id="2DFV"/>
    </source>
</evidence>
<dbReference type="EC" id="1.1.1.103" evidence="1 2 3"/>
<dbReference type="EMBL" id="BA000001">
    <property type="protein sequence ID" value="BAA29746.1"/>
    <property type="molecule type" value="Genomic_DNA"/>
</dbReference>
<dbReference type="PIR" id="H71110">
    <property type="entry name" value="H71110"/>
</dbReference>
<dbReference type="RefSeq" id="WP_010884751.1">
    <property type="nucleotide sequence ID" value="NC_000961.1"/>
</dbReference>
<dbReference type="PDB" id="2D8A">
    <property type="method" value="X-ray"/>
    <property type="resolution" value="2.05 A"/>
    <property type="chains" value="A=1-348"/>
</dbReference>
<dbReference type="PDB" id="2DFV">
    <property type="method" value="X-ray"/>
    <property type="resolution" value="2.05 A"/>
    <property type="chains" value="A/B/C=2-348"/>
</dbReference>
<dbReference type="PDBsum" id="2D8A"/>
<dbReference type="PDBsum" id="2DFV"/>
<dbReference type="SMR" id="O58389"/>
<dbReference type="MINT" id="O58389"/>
<dbReference type="STRING" id="70601.gene:9377599"/>
<dbReference type="EnsemblBacteria" id="BAA29746">
    <property type="protein sequence ID" value="BAA29746"/>
    <property type="gene ID" value="BAA29746"/>
</dbReference>
<dbReference type="GeneID" id="1442986"/>
<dbReference type="KEGG" id="pho:PH0655"/>
<dbReference type="eggNOG" id="arCOG01459">
    <property type="taxonomic scope" value="Archaea"/>
</dbReference>
<dbReference type="OrthoDB" id="73567at2157"/>
<dbReference type="BRENDA" id="1.1.1.103">
    <property type="organism ID" value="5244"/>
</dbReference>
<dbReference type="SABIO-RK" id="O58389"/>
<dbReference type="UniPathway" id="UPA00046">
    <property type="reaction ID" value="UER00505"/>
</dbReference>
<dbReference type="EvolutionaryTrace" id="O58389"/>
<dbReference type="Proteomes" id="UP000000752">
    <property type="component" value="Chromosome"/>
</dbReference>
<dbReference type="GO" id="GO:0005737">
    <property type="term" value="C:cytoplasm"/>
    <property type="evidence" value="ECO:0007669"/>
    <property type="project" value="UniProtKB-SubCell"/>
</dbReference>
<dbReference type="GO" id="GO:0016597">
    <property type="term" value="F:amino acid binding"/>
    <property type="evidence" value="ECO:0000314"/>
    <property type="project" value="UniProtKB"/>
</dbReference>
<dbReference type="GO" id="GO:0008743">
    <property type="term" value="F:L-threonine 3-dehydrogenase activity"/>
    <property type="evidence" value="ECO:0000314"/>
    <property type="project" value="UniProtKB"/>
</dbReference>
<dbReference type="GO" id="GO:0070403">
    <property type="term" value="F:NAD+ binding"/>
    <property type="evidence" value="ECO:0000314"/>
    <property type="project" value="UniProtKB"/>
</dbReference>
<dbReference type="GO" id="GO:0070401">
    <property type="term" value="F:NADP+ binding"/>
    <property type="evidence" value="ECO:0000314"/>
    <property type="project" value="UniProtKB"/>
</dbReference>
<dbReference type="GO" id="GO:0008270">
    <property type="term" value="F:zinc ion binding"/>
    <property type="evidence" value="ECO:0000314"/>
    <property type="project" value="UniProtKB"/>
</dbReference>
<dbReference type="GO" id="GO:0019518">
    <property type="term" value="P:L-threonine catabolic process to glycine"/>
    <property type="evidence" value="ECO:0007669"/>
    <property type="project" value="UniProtKB-UniPathway"/>
</dbReference>
<dbReference type="GO" id="GO:0051289">
    <property type="term" value="P:protein homotetramerization"/>
    <property type="evidence" value="ECO:0000314"/>
    <property type="project" value="UniProtKB"/>
</dbReference>
<dbReference type="GO" id="GO:0006566">
    <property type="term" value="P:threonine metabolic process"/>
    <property type="evidence" value="ECO:0000314"/>
    <property type="project" value="UniProtKB"/>
</dbReference>
<dbReference type="CDD" id="cd05281">
    <property type="entry name" value="TDH"/>
    <property type="match status" value="1"/>
</dbReference>
<dbReference type="FunFam" id="3.40.50.720:FF:000068">
    <property type="entry name" value="Sorbitol dehydrogenase"/>
    <property type="match status" value="1"/>
</dbReference>
<dbReference type="Gene3D" id="3.90.180.10">
    <property type="entry name" value="Medium-chain alcohol dehydrogenases, catalytic domain"/>
    <property type="match status" value="1"/>
</dbReference>
<dbReference type="Gene3D" id="3.40.50.720">
    <property type="entry name" value="NAD(P)-binding Rossmann-like Domain"/>
    <property type="match status" value="1"/>
</dbReference>
<dbReference type="HAMAP" id="MF_00627">
    <property type="entry name" value="Thr_dehydrog"/>
    <property type="match status" value="1"/>
</dbReference>
<dbReference type="InterPro" id="IPR013149">
    <property type="entry name" value="ADH-like_C"/>
</dbReference>
<dbReference type="InterPro" id="IPR013154">
    <property type="entry name" value="ADH-like_N"/>
</dbReference>
<dbReference type="InterPro" id="IPR002328">
    <property type="entry name" value="ADH_Zn_CS"/>
</dbReference>
<dbReference type="InterPro" id="IPR011032">
    <property type="entry name" value="GroES-like_sf"/>
</dbReference>
<dbReference type="InterPro" id="IPR004627">
    <property type="entry name" value="L-Threonine_3-DHase"/>
</dbReference>
<dbReference type="InterPro" id="IPR036291">
    <property type="entry name" value="NAD(P)-bd_dom_sf"/>
</dbReference>
<dbReference type="InterPro" id="IPR020843">
    <property type="entry name" value="PKS_ER"/>
</dbReference>
<dbReference type="InterPro" id="IPR050129">
    <property type="entry name" value="Zn_alcohol_dh"/>
</dbReference>
<dbReference type="NCBIfam" id="NF003808">
    <property type="entry name" value="PRK05396.1"/>
    <property type="match status" value="1"/>
</dbReference>
<dbReference type="NCBIfam" id="TIGR00692">
    <property type="entry name" value="tdh"/>
    <property type="match status" value="1"/>
</dbReference>
<dbReference type="PANTHER" id="PTHR43401">
    <property type="entry name" value="L-THREONINE 3-DEHYDROGENASE"/>
    <property type="match status" value="1"/>
</dbReference>
<dbReference type="PANTHER" id="PTHR43401:SF2">
    <property type="entry name" value="L-THREONINE 3-DEHYDROGENASE"/>
    <property type="match status" value="1"/>
</dbReference>
<dbReference type="Pfam" id="PF08240">
    <property type="entry name" value="ADH_N"/>
    <property type="match status" value="1"/>
</dbReference>
<dbReference type="Pfam" id="PF00107">
    <property type="entry name" value="ADH_zinc_N"/>
    <property type="match status" value="1"/>
</dbReference>
<dbReference type="SMART" id="SM00829">
    <property type="entry name" value="PKS_ER"/>
    <property type="match status" value="1"/>
</dbReference>
<dbReference type="SUPFAM" id="SSF50129">
    <property type="entry name" value="GroES-like"/>
    <property type="match status" value="1"/>
</dbReference>
<dbReference type="SUPFAM" id="SSF51735">
    <property type="entry name" value="NAD(P)-binding Rossmann-fold domains"/>
    <property type="match status" value="1"/>
</dbReference>
<dbReference type="PROSITE" id="PS00059">
    <property type="entry name" value="ADH_ZINC"/>
    <property type="match status" value="1"/>
</dbReference>
<gene>
    <name evidence="1" type="primary">tdh</name>
    <name type="ordered locus">PH0655</name>
</gene>
<comment type="function">
    <text evidence="2 3">Catalyzes the NAD(+)-dependent oxidation of L-threonine to 2-amino-3-ketobutyrate (PubMed:15902509, PubMed:16233775). Is much less efficient when using NADP(+) instead of NAD(+) (PubMed:16233775). To a lesser extent, also catalyzes the oxidation of L-serine and DL-threo-3-phenylserine, but not that of L-allo-threonine, D-threonine and D-allo-threonine and many other L-amino acids (PubMed:15902509).</text>
</comment>
<comment type="catalytic activity">
    <reaction evidence="1 2 3">
        <text>L-threonine + NAD(+) = (2S)-2-amino-3-oxobutanoate + NADH + H(+)</text>
        <dbReference type="Rhea" id="RHEA:13161"/>
        <dbReference type="ChEBI" id="CHEBI:15378"/>
        <dbReference type="ChEBI" id="CHEBI:57540"/>
        <dbReference type="ChEBI" id="CHEBI:57926"/>
        <dbReference type="ChEBI" id="CHEBI:57945"/>
        <dbReference type="ChEBI" id="CHEBI:78948"/>
        <dbReference type="EC" id="1.1.1.103"/>
    </reaction>
</comment>
<comment type="cofactor">
    <cofactor evidence="1 2 3">
        <name>Zn(2+)</name>
        <dbReference type="ChEBI" id="CHEBI:29105"/>
    </cofactor>
    <text evidence="1 2 9">Binds 2 Zn(2+) ions per subunit. Contains one structural ion and one catalytic ion that seems to be less tightly bound at the site (PubMed:16233775). Zn(2+) can be replaced by Mn(2+) or Co(2+) to some extent (PubMed:15902509).</text>
</comment>
<comment type="activity regulation">
    <text evidence="2 3">Is totally inhibited by EDTA in vitro.</text>
</comment>
<comment type="biophysicochemical properties">
    <kinetics>
        <KM evidence="2">0.2 mM for L-threonine (at 50 degrees Celsius)</KM>
        <KM evidence="2">0.024 mM for NAD(+) (at 50 degrees Celsius)</KM>
        <KM evidence="3">0.013 mM for L-threonine (in the presence of NAD(+) as cosubstrate, at 65 degrees Celsius)</KM>
        <KM evidence="3">0.01 mM for NAD(+) (at 65 degrees Celsius)</KM>
        <KM evidence="3">0.447 mM for L-threonine (in the presence of NAD(+) as cosubstrate, at 65 degrees Celsius)</KM>
        <KM evidence="3">0.689 mM for NADP(+) (at 65 degrees Celsius)</KM>
        <Vmax evidence="3">1.75 mmol/min/mg enzyme for the NAD(+) oxidation of L-threonine (at 65 degrees Celsius)</Vmax>
        <Vmax evidence="3">1.32 mmol/min/mg enzyme for the NADP(+) oxidation of L-threonine (at 65 degrees Celsius)</Vmax>
    </kinetics>
    <phDependence>
        <text evidence="2">Optimum pH is around 10. Below and above pH 10, the marked decrease of activity is observed: the relative activities are 50, 22 and 55% at pH 9.5, 9.2 and 12, respectively. Is stable over a wide pH range: upon heating at 50 degrees Celsius for 20 minutes, the enzyme does not lose activity at pH 4.5-10.0.</text>
    </phDependence>
    <temperatureDependence>
        <text evidence="2 3">Optimum temperature is 70 degrees Celsius. Extremely thermostable, the activity is not lost after incubation at 100 degrees Celsius for 20 minutes.</text>
    </temperatureDependence>
</comment>
<comment type="pathway">
    <text evidence="1 9">Amino-acid degradation; L-threonine degradation via oxydo-reductase pathway; glycine from L-threonine: step 1/2.</text>
</comment>
<comment type="subunit">
    <text evidence="2 3 4">Homodimer (PubMed:16233775). Homotetramer; dimer of dimers (PubMed:15902509, PubMed:17188300).</text>
</comment>
<comment type="subcellular location">
    <subcellularLocation>
        <location evidence="1">Cytoplasm</location>
    </subcellularLocation>
</comment>
<comment type="miscellaneous">
    <text evidence="2">The enzyme shows pro-R stereospecificity for hydrogen transfer at the C4 position of the nicotinamide moiety of NADH.</text>
</comment>
<comment type="similarity">
    <text evidence="1">Belongs to the zinc-containing alcohol dehydrogenase family.</text>
</comment>
<proteinExistence type="evidence at protein level"/>
<name>TDH_PYRHO</name>
<accession>O58389</accession>
<sequence length="348" mass="37786">MSEKMVAIMKTKPGYGAELVEVDVPKPGPGEVLIKVLATSICGTDLHIYEWNEWAQSRIKPPQIMGHEVAGEVVEIGPGVEGIEVGDYVSVETHIVCGKCYACRRGQYHVCQNTKIFGVDTDGVFAEYAVVPAQNIWKNPKSIPPEYATLQEPLGNAVDTVLAGPISGKSVLITGAGPLGLLGIAVAKASGAYPVIVSEPSDFRRELAKKVGADYVINPFEEDVVKEVMDITDGNGVDVFLEFSGAPKALEQGLQAVTPAGRVSLLGLYPGKVTIDFNNLIIFKALTIYGITGRHLWETWYTVSRLLQSGKLNLDPIITHKYKGFDKYEEAFELMRAGKTGKVVFMLK</sequence>
<keyword id="KW-0002">3D-structure</keyword>
<keyword id="KW-0963">Cytoplasm</keyword>
<keyword id="KW-0479">Metal-binding</keyword>
<keyword id="KW-0520">NAD</keyword>
<keyword id="KW-0521">NADP</keyword>
<keyword id="KW-0560">Oxidoreductase</keyword>
<keyword id="KW-0862">Zinc</keyword>
<reference key="1">
    <citation type="journal article" date="1998" name="DNA Res.">
        <title>Complete sequence and gene organization of the genome of a hyper-thermophilic archaebacterium, Pyrococcus horikoshii OT3.</title>
        <authorList>
            <person name="Kawarabayasi Y."/>
            <person name="Sawada M."/>
            <person name="Horikawa H."/>
            <person name="Haikawa Y."/>
            <person name="Hino Y."/>
            <person name="Yamamoto S."/>
            <person name="Sekine M."/>
            <person name="Baba S."/>
            <person name="Kosugi H."/>
            <person name="Hosoyama A."/>
            <person name="Nagai Y."/>
            <person name="Sakai M."/>
            <person name="Ogura K."/>
            <person name="Otsuka R."/>
            <person name="Nakazawa H."/>
            <person name="Takamiya M."/>
            <person name="Ohfuku Y."/>
            <person name="Funahashi T."/>
            <person name="Tanaka T."/>
            <person name="Kudoh Y."/>
            <person name="Yamazaki J."/>
            <person name="Kushida N."/>
            <person name="Oguchi A."/>
            <person name="Aoki K."/>
            <person name="Yoshizawa T."/>
            <person name="Nakamura Y."/>
            <person name="Robb F.T."/>
            <person name="Horikoshi K."/>
            <person name="Masuchi Y."/>
            <person name="Shizuya H."/>
            <person name="Kikuchi H."/>
        </authorList>
    </citation>
    <scope>NUCLEOTIDE SEQUENCE [LARGE SCALE GENOMIC DNA]</scope>
    <source>
        <strain>ATCC 700860 / DSM 12428 / JCM 9974 / NBRC 100139 / OT-3</strain>
    </source>
</reference>
<reference key="2">
    <citation type="journal article" date="2005" name="Extremophiles">
        <title>L-Threonine dehydrogenase from the hyperthermophilic archaeon Pyrococcus horikoshii OT3: gene cloning and enzymatic characterization.</title>
        <authorList>
            <person name="Shimizu Y."/>
            <person name="Sakuraba H."/>
            <person name="Kawakami R."/>
            <person name="Goda S."/>
            <person name="Kawarabayasi Y."/>
            <person name="Ohshima T."/>
        </authorList>
    </citation>
    <scope>FUNCTION</scope>
    <scope>CATALYTIC ACTIVITY</scope>
    <scope>SUBSTRATE SPECIFICITY</scope>
    <scope>BIOPHYSICOCHEMICAL PROPERTIES</scope>
    <scope>COFACTOR</scope>
    <scope>ACTIVITY REGULATION</scope>
    <scope>SUBUNIT</scope>
    <source>
        <strain>ATCC 700860 / DSM 12428 / JCM 9974 / NBRC 100139 / OT-3</strain>
    </source>
</reference>
<reference key="3">
    <citation type="journal article" date="2005" name="J. Biosci. Bioeng.">
        <title>Kinetic study of thermostable L-threonine dehydrogenase from an archaeon Pyrococcus horikoshii.</title>
        <authorList>
            <person name="Higashi N."/>
            <person name="Fukada H."/>
            <person name="Ishikawa K."/>
        </authorList>
    </citation>
    <scope>FUNCTION</scope>
    <scope>CATALYTIC ACTIVITY</scope>
    <scope>BIOPHYSICOCHEMICAL PROPERTIES</scope>
    <scope>SUBUNIT</scope>
    <scope>COFACTOR</scope>
    <scope>ACTIVITY REGULATION</scope>
</reference>
<reference key="4">
    <citation type="journal article" date="2008" name="J. Biochem.">
        <title>Investigating a catalytic mechanism of hyperthermophilic L-threonine dehydrogenase from Pyrococcus horikoshii.</title>
        <authorList>
            <person name="Higashi N."/>
            <person name="Tanimoto K."/>
            <person name="Nishioka M."/>
            <person name="Ishikawa K."/>
            <person name="Taya M."/>
        </authorList>
    </citation>
    <scope>REACTION MECHANISM</scope>
    <scope>ACTIVE SITE</scope>
    <scope>MUTAGENESIS OF THR-44; GLU-152 AND ARG-294</scope>
</reference>
<reference key="5">
    <citation type="submission" date="2005-12" db="PDB data bank">
        <title>Crystal structure of PH0655 from Pyrococcus horikoshii OT3.</title>
        <authorList>
            <person name="Asada Y."/>
            <person name="Kunishima N."/>
        </authorList>
    </citation>
    <scope>X-RAY CRYSTALLOGRAPHY (2.05 ANGSTROMS) IN COMPLEX WITH NAD AND ZINC</scope>
</reference>
<reference key="6">
    <citation type="journal article" date="2007" name="J. Mol. Biol.">
        <title>The first crystal structure of L-threonine dehydrogenase.</title>
        <authorList>
            <person name="Ishikawa K."/>
            <person name="Higashi N."/>
            <person name="Nakamura T."/>
            <person name="Matsuura T."/>
            <person name="Nakagawa A."/>
        </authorList>
    </citation>
    <scope>X-RAY CRYSTALLOGRAPHY (2.05 ANGSTROMS) OF 2-348 IN COMPLEX WITH NAD AND ZINC</scope>
    <scope>SUBUNIT</scope>
    <scope>MUTAGENESIS OF GLU-199 AND ARG-204</scope>
</reference>
<feature type="chain" id="PRO_0000160877" description="L-threonine 3-dehydrogenase">
    <location>
        <begin position="1"/>
        <end position="348"/>
    </location>
</feature>
<feature type="active site" description="Charge relay system" evidence="11">
    <location>
        <position position="44"/>
    </location>
</feature>
<feature type="active site" description="Charge relay system" evidence="11">
    <location>
        <position position="47"/>
    </location>
</feature>
<feature type="binding site" evidence="1 6 10 11 12">
    <location>
        <position position="42"/>
    </location>
    <ligand>
        <name>Zn(2+)</name>
        <dbReference type="ChEBI" id="CHEBI:29105"/>
        <label>1</label>
        <note>catalytic</note>
    </ligand>
</feature>
<feature type="binding site" evidence="1 6 10 11 12">
    <location>
        <position position="67"/>
    </location>
    <ligand>
        <name>Zn(2+)</name>
        <dbReference type="ChEBI" id="CHEBI:29105"/>
        <label>1</label>
        <note>catalytic</note>
    </ligand>
</feature>
<feature type="binding site" evidence="1 6 10 11 12">
    <location>
        <position position="68"/>
    </location>
    <ligand>
        <name>Zn(2+)</name>
        <dbReference type="ChEBI" id="CHEBI:29105"/>
        <label>1</label>
        <note>catalytic</note>
    </ligand>
</feature>
<feature type="binding site" evidence="1 4 13">
    <location>
        <position position="97"/>
    </location>
    <ligand>
        <name>Zn(2+)</name>
        <dbReference type="ChEBI" id="CHEBI:29105"/>
        <label>2</label>
    </ligand>
</feature>
<feature type="binding site" evidence="1 4 13">
    <location>
        <position position="100"/>
    </location>
    <ligand>
        <name>Zn(2+)</name>
        <dbReference type="ChEBI" id="CHEBI:29105"/>
        <label>2</label>
    </ligand>
</feature>
<feature type="binding site" evidence="1 4 13">
    <location>
        <position position="103"/>
    </location>
    <ligand>
        <name>Zn(2+)</name>
        <dbReference type="ChEBI" id="CHEBI:29105"/>
        <label>2</label>
    </ligand>
</feature>
<feature type="binding site" evidence="1 4 13">
    <location>
        <position position="111"/>
    </location>
    <ligand>
        <name>Zn(2+)</name>
        <dbReference type="ChEBI" id="CHEBI:29105"/>
        <label>2</label>
    </ligand>
</feature>
<feature type="binding site" evidence="4 6">
    <location>
        <position position="179"/>
    </location>
    <ligand>
        <name>NAD(+)</name>
        <dbReference type="ChEBI" id="CHEBI:57540"/>
    </ligand>
</feature>
<feature type="binding site" evidence="4 6 12 13">
    <location>
        <position position="199"/>
    </location>
    <ligand>
        <name>NAD(+)</name>
        <dbReference type="ChEBI" id="CHEBI:57540"/>
    </ligand>
</feature>
<feature type="binding site" evidence="4 6 12 13">
    <location>
        <position position="204"/>
    </location>
    <ligand>
        <name>NAD(+)</name>
        <dbReference type="ChEBI" id="CHEBI:57540"/>
    </ligand>
</feature>
<feature type="binding site" evidence="6 12">
    <location>
        <begin position="266"/>
        <end position="268"/>
    </location>
    <ligand>
        <name>NAD(+)</name>
        <dbReference type="ChEBI" id="CHEBI:57540"/>
    </ligand>
</feature>
<feature type="binding site" evidence="6 12">
    <location>
        <begin position="291"/>
        <end position="292"/>
    </location>
    <ligand>
        <name>NAD(+)</name>
        <dbReference type="ChEBI" id="CHEBI:57540"/>
    </ligand>
</feature>
<feature type="site" description="Important for catalytic activity for the proton relay mechanism but does not participate directly in the coordination of zinc atom" evidence="11">
    <location>
        <position position="152"/>
    </location>
</feature>
<feature type="mutagenesis site" description="Total loss of enzymatic activity." evidence="5">
    <original>T</original>
    <variation>A</variation>
    <location>
        <position position="44"/>
    </location>
</feature>
<feature type="mutagenesis site" description="Almost complete loss of enzymatic activity." evidence="5">
    <original>E</original>
    <variation>A</variation>
    <variation>Q</variation>
    <location>
        <position position="152"/>
    </location>
</feature>
<feature type="mutagenesis site" description="120-fold decrease in catalytic efficiency." evidence="5">
    <original>E</original>
    <variation>C</variation>
    <location>
        <position position="152"/>
    </location>
</feature>
<feature type="mutagenesis site" description="Shows 3-fold higher turnover rate and reduced affinities toward L-threonine and NAD(+), compared to wild-type." evidence="5">
    <original>E</original>
    <variation>D</variation>
    <location>
        <position position="152"/>
    </location>
</feature>
<feature type="mutagenesis site" description="Total loss of enzymatic activity." evidence="5">
    <original>E</original>
    <variation>K</variation>
    <location>
        <position position="152"/>
    </location>
</feature>
<feature type="mutagenesis site" description="Large decrease in affinity for NAD(+)." evidence="4">
    <original>E</original>
    <variation>A</variation>
    <location>
        <position position="199"/>
    </location>
</feature>
<feature type="mutagenesis site" description="Large decrease in affinity for NAD(+)." evidence="4">
    <original>R</original>
    <variation>A</variation>
    <location>
        <position position="204"/>
    </location>
</feature>
<feature type="mutagenesis site" description="4000-fold decrease in catalytic efficiency." evidence="5">
    <original>R</original>
    <variation>A</variation>
    <location>
        <position position="294"/>
    </location>
</feature>
<feature type="strand" evidence="14">
    <location>
        <begin position="4"/>
        <end position="10"/>
    </location>
</feature>
<feature type="strand" evidence="14">
    <location>
        <begin position="12"/>
        <end position="16"/>
    </location>
</feature>
<feature type="strand" evidence="14">
    <location>
        <begin position="18"/>
        <end position="23"/>
    </location>
</feature>
<feature type="strand" evidence="14">
    <location>
        <begin position="31"/>
        <end position="40"/>
    </location>
</feature>
<feature type="helix" evidence="14">
    <location>
        <begin position="43"/>
        <end position="50"/>
    </location>
</feature>
<feature type="helix" evidence="14">
    <location>
        <begin position="55"/>
        <end position="58"/>
    </location>
</feature>
<feature type="strand" evidence="14">
    <location>
        <begin position="61"/>
        <end position="64"/>
    </location>
</feature>
<feature type="strand" evidence="14">
    <location>
        <begin position="68"/>
        <end position="76"/>
    </location>
</feature>
<feature type="strand" evidence="14">
    <location>
        <begin position="88"/>
        <end position="91"/>
    </location>
</feature>
<feature type="helix" evidence="15">
    <location>
        <begin position="101"/>
        <end position="104"/>
    </location>
</feature>
<feature type="helix" evidence="15">
    <location>
        <begin position="108"/>
        <end position="110"/>
    </location>
</feature>
<feature type="turn" evidence="14">
    <location>
        <begin position="117"/>
        <end position="119"/>
    </location>
</feature>
<feature type="strand" evidence="14">
    <location>
        <begin position="124"/>
        <end position="132"/>
    </location>
</feature>
<feature type="helix" evidence="14">
    <location>
        <begin position="133"/>
        <end position="135"/>
    </location>
</feature>
<feature type="strand" evidence="14">
    <location>
        <begin position="136"/>
        <end position="138"/>
    </location>
</feature>
<feature type="helix" evidence="14">
    <location>
        <begin position="145"/>
        <end position="148"/>
    </location>
</feature>
<feature type="helix" evidence="14">
    <location>
        <begin position="151"/>
        <end position="161"/>
    </location>
</feature>
<feature type="strand" evidence="14">
    <location>
        <begin position="171"/>
        <end position="174"/>
    </location>
</feature>
<feature type="helix" evidence="14">
    <location>
        <begin position="178"/>
        <end position="189"/>
    </location>
</feature>
<feature type="strand" evidence="14">
    <location>
        <begin position="194"/>
        <end position="198"/>
    </location>
</feature>
<feature type="helix" evidence="14">
    <location>
        <begin position="202"/>
        <end position="211"/>
    </location>
</feature>
<feature type="strand" evidence="14">
    <location>
        <begin position="214"/>
        <end position="217"/>
    </location>
</feature>
<feature type="turn" evidence="14">
    <location>
        <begin position="219"/>
        <end position="221"/>
    </location>
</feature>
<feature type="helix" evidence="14">
    <location>
        <begin position="224"/>
        <end position="231"/>
    </location>
</feature>
<feature type="turn" evidence="14">
    <location>
        <begin position="232"/>
        <end position="234"/>
    </location>
</feature>
<feature type="strand" evidence="14">
    <location>
        <begin position="237"/>
        <end position="242"/>
    </location>
</feature>
<feature type="helix" evidence="14">
    <location>
        <begin position="247"/>
        <end position="256"/>
    </location>
</feature>
<feature type="strand" evidence="14">
    <location>
        <begin position="257"/>
        <end position="265"/>
    </location>
</feature>
<feature type="helix" evidence="14">
    <location>
        <begin position="277"/>
        <end position="280"/>
    </location>
</feature>
<feature type="turn" evidence="14">
    <location>
        <begin position="281"/>
        <end position="285"/>
    </location>
</feature>
<feature type="strand" evidence="14">
    <location>
        <begin position="287"/>
        <end position="290"/>
    </location>
</feature>
<feature type="helix" evidence="14">
    <location>
        <begin position="297"/>
        <end position="309"/>
    </location>
</feature>
<feature type="turn" evidence="14">
    <location>
        <begin position="315"/>
        <end position="317"/>
    </location>
</feature>
<feature type="strand" evidence="14">
    <location>
        <begin position="318"/>
        <end position="325"/>
    </location>
</feature>
<feature type="helix" evidence="14">
    <location>
        <begin position="328"/>
        <end position="336"/>
    </location>
</feature>
<feature type="strand" evidence="14">
    <location>
        <begin position="341"/>
        <end position="346"/>
    </location>
</feature>
<protein>
    <recommendedName>
        <fullName evidence="1">L-threonine 3-dehydrogenase</fullName>
        <shortName evidence="7">L-ThrDH</shortName>
        <shortName evidence="1 8">TDH</shortName>
        <ecNumber evidence="1 2 3">1.1.1.103</ecNumber>
    </recommendedName>
    <alternativeName>
        <fullName evidence="7 8">L-threonine dehydrogenase</fullName>
    </alternativeName>
</protein>
<organism>
    <name type="scientific">Pyrococcus horikoshii (strain ATCC 700860 / DSM 12428 / JCM 9974 / NBRC 100139 / OT-3)</name>
    <dbReference type="NCBI Taxonomy" id="70601"/>
    <lineage>
        <taxon>Archaea</taxon>
        <taxon>Methanobacteriati</taxon>
        <taxon>Methanobacteriota</taxon>
        <taxon>Thermococci</taxon>
        <taxon>Thermococcales</taxon>
        <taxon>Thermococcaceae</taxon>
        <taxon>Pyrococcus</taxon>
    </lineage>
</organism>